<gene>
    <name evidence="1" type="primary">coq5</name>
</gene>
<feature type="transit peptide" description="Mitochondrion" evidence="1">
    <location>
        <begin position="1"/>
        <end position="6"/>
    </location>
</feature>
<feature type="chain" id="PRO_0000228634" description="2-methoxy-6-polyprenyl-1,4-benzoquinol methylase, mitochondrial">
    <location>
        <begin position="7"/>
        <end position="310"/>
    </location>
</feature>
<feature type="binding site" evidence="1">
    <location>
        <position position="99"/>
    </location>
    <ligand>
        <name>S-adenosyl-L-methionine</name>
        <dbReference type="ChEBI" id="CHEBI:59789"/>
    </ligand>
</feature>
<feature type="binding site" evidence="1">
    <location>
        <position position="154"/>
    </location>
    <ligand>
        <name>S-adenosyl-L-methionine</name>
        <dbReference type="ChEBI" id="CHEBI:59789"/>
    </ligand>
</feature>
<feature type="binding site" evidence="1">
    <location>
        <begin position="182"/>
        <end position="183"/>
    </location>
    <ligand>
        <name>S-adenosyl-L-methionine</name>
        <dbReference type="ChEBI" id="CHEBI:59789"/>
    </ligand>
</feature>
<sequence>MAHMRSVLRGRLCGMREILRCQKASYTEASRKETHFGFQAVSEEEKRERVYKVFENVAHNYDIMNDAMSLGVHRFWKDWLLQLMKPTPGMQLLDMAGGTGDISFRFINYIRAQREKWIRQELKFQQDLSWPDISKTYQNKEEGSLMGSRAVICDINKEMLKVGLQKSLRLGYSEGLSWVAGDAEELPFGDDKFDVYTIAFGIRNVTHIEQALQEAYRVLKPGGRFLCLEFSHVNNPLLSKIYDVYSFQVIPVLGEVIAKDWKSYQYLVESIRRFPSQEEFKAMIEDAGFSKVNYHNLTSGVVAVHSGFKL</sequence>
<dbReference type="EC" id="2.1.1.201" evidence="1"/>
<dbReference type="EMBL" id="BC097761">
    <property type="protein sequence ID" value="AAH97761.1"/>
    <property type="molecule type" value="mRNA"/>
</dbReference>
<dbReference type="RefSeq" id="NP_001089511.1">
    <property type="nucleotide sequence ID" value="NM_001096042.1"/>
</dbReference>
<dbReference type="SMR" id="Q4V7R3"/>
<dbReference type="DNASU" id="734563"/>
<dbReference type="GeneID" id="734563"/>
<dbReference type="KEGG" id="xla:734563"/>
<dbReference type="AGR" id="Xenbase:XB-GENE-981150"/>
<dbReference type="CTD" id="734563"/>
<dbReference type="Xenbase" id="XB-GENE-981150">
    <property type="gene designation" value="coq5.L"/>
</dbReference>
<dbReference type="OMA" id="MNDVMSM"/>
<dbReference type="OrthoDB" id="6329284at2759"/>
<dbReference type="UniPathway" id="UPA00232"/>
<dbReference type="Proteomes" id="UP000186698">
    <property type="component" value="Chromosome 1L"/>
</dbReference>
<dbReference type="Bgee" id="734563">
    <property type="expression patterns" value="Expressed in muscle tissue and 19 other cell types or tissues"/>
</dbReference>
<dbReference type="GO" id="GO:0031314">
    <property type="term" value="C:extrinsic component of mitochondrial inner membrane"/>
    <property type="evidence" value="ECO:0007669"/>
    <property type="project" value="UniProtKB-UniRule"/>
</dbReference>
<dbReference type="GO" id="GO:0008425">
    <property type="term" value="F:2-methoxy-6-polyprenyl-1,4-benzoquinol methyltransferase activity"/>
    <property type="evidence" value="ECO:0000250"/>
    <property type="project" value="UniProtKB"/>
</dbReference>
<dbReference type="GO" id="GO:0032259">
    <property type="term" value="P:methylation"/>
    <property type="evidence" value="ECO:0007669"/>
    <property type="project" value="UniProtKB-KW"/>
</dbReference>
<dbReference type="GO" id="GO:0006744">
    <property type="term" value="P:ubiquinone biosynthetic process"/>
    <property type="evidence" value="ECO:0000250"/>
    <property type="project" value="UniProtKB"/>
</dbReference>
<dbReference type="CDD" id="cd02440">
    <property type="entry name" value="AdoMet_MTases"/>
    <property type="match status" value="1"/>
</dbReference>
<dbReference type="FunFam" id="3.40.50.150:FF:000064">
    <property type="entry name" value="2-methoxy-6-polyprenyl-1,4-benzoquinol methylase, mitochondrial"/>
    <property type="match status" value="1"/>
</dbReference>
<dbReference type="Gene3D" id="3.40.50.150">
    <property type="entry name" value="Vaccinia Virus protein VP39"/>
    <property type="match status" value="1"/>
</dbReference>
<dbReference type="HAMAP" id="MF_01813">
    <property type="entry name" value="MenG_UbiE_methyltr"/>
    <property type="match status" value="1"/>
</dbReference>
<dbReference type="InterPro" id="IPR029063">
    <property type="entry name" value="SAM-dependent_MTases_sf"/>
</dbReference>
<dbReference type="InterPro" id="IPR004033">
    <property type="entry name" value="UbiE/COQ5_MeTrFase"/>
</dbReference>
<dbReference type="InterPro" id="IPR023576">
    <property type="entry name" value="UbiE/COQ5_MeTrFase_CS"/>
</dbReference>
<dbReference type="NCBIfam" id="TIGR01934">
    <property type="entry name" value="MenG_MenH_UbiE"/>
    <property type="match status" value="1"/>
</dbReference>
<dbReference type="PANTHER" id="PTHR43591:SF24">
    <property type="entry name" value="2-METHOXY-6-POLYPRENYL-1,4-BENZOQUINOL METHYLASE, MITOCHONDRIAL"/>
    <property type="match status" value="1"/>
</dbReference>
<dbReference type="PANTHER" id="PTHR43591">
    <property type="entry name" value="METHYLTRANSFERASE"/>
    <property type="match status" value="1"/>
</dbReference>
<dbReference type="Pfam" id="PF01209">
    <property type="entry name" value="Ubie_methyltran"/>
    <property type="match status" value="1"/>
</dbReference>
<dbReference type="SUPFAM" id="SSF53335">
    <property type="entry name" value="S-adenosyl-L-methionine-dependent methyltransferases"/>
    <property type="match status" value="1"/>
</dbReference>
<dbReference type="PROSITE" id="PS51608">
    <property type="entry name" value="SAM_MT_UBIE"/>
    <property type="match status" value="1"/>
</dbReference>
<dbReference type="PROSITE" id="PS01183">
    <property type="entry name" value="UBIE_1"/>
    <property type="match status" value="1"/>
</dbReference>
<dbReference type="PROSITE" id="PS01184">
    <property type="entry name" value="UBIE_2"/>
    <property type="match status" value="1"/>
</dbReference>
<reference key="1">
    <citation type="submission" date="2005-06" db="EMBL/GenBank/DDBJ databases">
        <authorList>
            <consortium name="NIH - Xenopus Gene Collection (XGC) project"/>
        </authorList>
    </citation>
    <scope>NUCLEOTIDE SEQUENCE [LARGE SCALE MRNA]</scope>
    <source>
        <tissue>Egg</tissue>
    </source>
</reference>
<accession>Q4V7R3</accession>
<keyword id="KW-0472">Membrane</keyword>
<keyword id="KW-0489">Methyltransferase</keyword>
<keyword id="KW-0496">Mitochondrion</keyword>
<keyword id="KW-0999">Mitochondrion inner membrane</keyword>
<keyword id="KW-1185">Reference proteome</keyword>
<keyword id="KW-0949">S-adenosyl-L-methionine</keyword>
<keyword id="KW-0808">Transferase</keyword>
<keyword id="KW-0809">Transit peptide</keyword>
<keyword id="KW-0831">Ubiquinone biosynthesis</keyword>
<proteinExistence type="evidence at transcript level"/>
<comment type="function">
    <text evidence="1">Methyltransferase required for the conversion of 2-polyprenyl-6-methoxy-1,4-benzoquinol (DDMQH2) to 2-polyprenyl-3-methyl-6-methoxy-1,4-benzoquinol (DMQH2).</text>
</comment>
<comment type="catalytic activity">
    <reaction evidence="1">
        <text>a 2-methoxy-6-(all-trans-polyprenyl)benzene-1,4-diol + S-adenosyl-L-methionine = a 5-methoxy-2-methyl-3-(all-trans-polyprenyl)benzene-1,4-diol + S-adenosyl-L-homocysteine + H(+)</text>
        <dbReference type="Rhea" id="RHEA:28286"/>
        <dbReference type="Rhea" id="RHEA-COMP:10858"/>
        <dbReference type="Rhea" id="RHEA-COMP:10859"/>
        <dbReference type="ChEBI" id="CHEBI:15378"/>
        <dbReference type="ChEBI" id="CHEBI:57856"/>
        <dbReference type="ChEBI" id="CHEBI:59789"/>
        <dbReference type="ChEBI" id="CHEBI:84166"/>
        <dbReference type="ChEBI" id="CHEBI:84167"/>
        <dbReference type="EC" id="2.1.1.201"/>
    </reaction>
</comment>
<comment type="pathway">
    <text evidence="1">Cofactor biosynthesis; ubiquinone biosynthesis.</text>
</comment>
<comment type="subunit">
    <text evidence="1">Component of a multi-subunit COQ enzyme complex, composed of at least coq3, coq4, coq5, coq6, coq7 and coq9.</text>
</comment>
<comment type="subcellular location">
    <subcellularLocation>
        <location evidence="1">Mitochondrion inner membrane</location>
        <topology evidence="1">Peripheral membrane protein</topology>
        <orientation evidence="1">Matrix side</orientation>
    </subcellularLocation>
</comment>
<comment type="similarity">
    <text evidence="1">Belongs to the class I-like SAM-binding methyltransferase superfamily. MenG/UbiE family.</text>
</comment>
<protein>
    <recommendedName>
        <fullName evidence="1">2-methoxy-6-polyprenyl-1,4-benzoquinol methylase, mitochondrial</fullName>
        <ecNumber evidence="1">2.1.1.201</ecNumber>
    </recommendedName>
    <alternativeName>
        <fullName evidence="1">Ubiquinone biosynthesis methyltransferase COQ5</fullName>
    </alternativeName>
</protein>
<organism>
    <name type="scientific">Xenopus laevis</name>
    <name type="common">African clawed frog</name>
    <dbReference type="NCBI Taxonomy" id="8355"/>
    <lineage>
        <taxon>Eukaryota</taxon>
        <taxon>Metazoa</taxon>
        <taxon>Chordata</taxon>
        <taxon>Craniata</taxon>
        <taxon>Vertebrata</taxon>
        <taxon>Euteleostomi</taxon>
        <taxon>Amphibia</taxon>
        <taxon>Batrachia</taxon>
        <taxon>Anura</taxon>
        <taxon>Pipoidea</taxon>
        <taxon>Pipidae</taxon>
        <taxon>Xenopodinae</taxon>
        <taxon>Xenopus</taxon>
        <taxon>Xenopus</taxon>
    </lineage>
</organism>
<name>COQ5_XENLA</name>
<evidence type="ECO:0000255" key="1">
    <source>
        <dbReference type="HAMAP-Rule" id="MF_03191"/>
    </source>
</evidence>